<accession>B7GM51</accession>
<comment type="function">
    <text evidence="1">The heterodimer acts as both an ATP-dependent DNA helicase and an ATP-dependent, dual-direction single-stranded exonuclease. Recognizes the chi site generating a DNA molecule suitable for the initiation of homologous recombination. The AddA nuclease domain is required for chi fragment generation; this subunit has the helicase and 3' -&gt; 5' nuclease activities.</text>
</comment>
<comment type="catalytic activity">
    <reaction evidence="1">
        <text>Couples ATP hydrolysis with the unwinding of duplex DNA by translocating in the 3'-5' direction.</text>
        <dbReference type="EC" id="5.6.2.4"/>
    </reaction>
</comment>
<comment type="catalytic activity">
    <reaction evidence="1">
        <text>ATP + H2O = ADP + phosphate + H(+)</text>
        <dbReference type="Rhea" id="RHEA:13065"/>
        <dbReference type="ChEBI" id="CHEBI:15377"/>
        <dbReference type="ChEBI" id="CHEBI:15378"/>
        <dbReference type="ChEBI" id="CHEBI:30616"/>
        <dbReference type="ChEBI" id="CHEBI:43474"/>
        <dbReference type="ChEBI" id="CHEBI:456216"/>
        <dbReference type="EC" id="5.6.2.4"/>
    </reaction>
</comment>
<comment type="cofactor">
    <cofactor evidence="1">
        <name>Mg(2+)</name>
        <dbReference type="ChEBI" id="CHEBI:18420"/>
    </cofactor>
</comment>
<comment type="subunit">
    <text evidence="1">Heterodimer of AddA and AddB/RexB.</text>
</comment>
<comment type="similarity">
    <text evidence="1">Belongs to the helicase family. AddA subfamily.</text>
</comment>
<keyword id="KW-0067">ATP-binding</keyword>
<keyword id="KW-0227">DNA damage</keyword>
<keyword id="KW-0234">DNA repair</keyword>
<keyword id="KW-0238">DNA-binding</keyword>
<keyword id="KW-0269">Exonuclease</keyword>
<keyword id="KW-0347">Helicase</keyword>
<keyword id="KW-0378">Hydrolase</keyword>
<keyword id="KW-0413">Isomerase</keyword>
<keyword id="KW-0540">Nuclease</keyword>
<keyword id="KW-0547">Nucleotide-binding</keyword>
<feature type="chain" id="PRO_0000379229" description="ATP-dependent helicase/nuclease subunit A">
    <location>
        <begin position="1"/>
        <end position="1209"/>
    </location>
</feature>
<feature type="domain" description="UvrD-like helicase ATP-binding" evidence="1">
    <location>
        <begin position="9"/>
        <end position="482"/>
    </location>
</feature>
<feature type="domain" description="UvrD-like helicase C-terminal" evidence="1">
    <location>
        <begin position="510"/>
        <end position="798"/>
    </location>
</feature>
<feature type="binding site" evidence="1">
    <location>
        <begin position="30"/>
        <end position="37"/>
    </location>
    <ligand>
        <name>ATP</name>
        <dbReference type="ChEBI" id="CHEBI:30616"/>
    </ligand>
</feature>
<sequence>MIPPKPRESQWTDEQWQAIYATGQHTLVAAAAGSGKTAVLVERIIQKILHKERPIDVDRLLVVTFTNAAAAEMRQRIGEALERALEKEPHSLHLRRQLSLLQKASISTIHSFCLDVIRKYYYVIGIDPVFRIADEGEMALLKEEVLETLFEQYYAENDEPFLTVVDRYTSDRTDADLQTLILRLYEFSRSHPNPSGWLQQIVHMYDVEEGARIDDLPYAHYLFQAVDLALEAAEYRLAQALQKTKEPGGPDYLYDTLASDEQVIAKLKEARHESWQQLHEAMKNVSFATAKRKPKDGAYDEQLVEDVKKLRDQVKKEISSITEELFSFQPVTYVRHLHEMKPIVTTIVQMVQRFAHLLQAKKDEKGIVDFSDLEHYCLRILRAPSLEHELKPSEAALYYRAQFAEVLVDEYQDTNMVQESILRLVSNDDEATGNMFMVGDVKQSIYGFRLAEPSLFLQKYNRFTKDGDGGLRIDLAKNFRSRKEILDGTNFIFRQLMTETVGDMRYDDDAALRFGAQDYPDKQIPVECVWINEAKEESDEEEQEDVTAVQLEARWIAKKIKQLLAEPFFVYDRRLKGERRLMYRDIVILCRSMSSASAMLEEFRKQNVPVYAELSSGYFSATEVSIMLSLLKVIDNPYQDIPLAAVLRSPIVGLDEEALARIRLAKKDGAFYEALCAFVQEPHDDELHEKMKRWLASLSEWRTAARQKPLADLIWQLYRETNFYDYVGGMPGGKQRQANLRALYDRAKQYEQTSFRGIFRFLRFIERLKEREDDFGAARSLTEQEDVVRMMTIHKSKGLEFPVVFLAGAAKSFNMQDLRSDYVLDKDFGLGMRFVHPTWRASYPTVAQLAIKKKMKWQLLAEEMRILYVALTRAKEKLYIVCTAKDMEAKKKKWQEVAYTSTWELPAYVIEKAKSYADWIGYALARHQQGICSSATVLHDPSLWDIHIVPAHELEQEDAQANEHRDIVEAIQQLQPVAIKSEYEEEVNRRLFWTYTHAPATVLRAKQSVSELKRQRDIYGGHAEQPFRKELVERPRFLQAKMMTPAERGTMMHLVMQHVDVTKEVTVDAVREQIARMVNGEWLTEEQATVIDVESIVAFFNTPIGKRMQRATRLEREVPFYLAHEMEGETVVVQGVIDCVFEDEHGLVLIDYKTDRVSWMNDPKQQLKRRYKGQLALYREAIEAIWKREVTETYVYAFDGALLVPMEVD</sequence>
<proteinExistence type="inferred from homology"/>
<dbReference type="EC" id="3.1.-.-" evidence="1"/>
<dbReference type="EC" id="5.6.2.4" evidence="1"/>
<dbReference type="EMBL" id="CP000922">
    <property type="protein sequence ID" value="ACJ34589.1"/>
    <property type="molecule type" value="Genomic_DNA"/>
</dbReference>
<dbReference type="RefSeq" id="WP_012575765.1">
    <property type="nucleotide sequence ID" value="NC_011567.1"/>
</dbReference>
<dbReference type="SMR" id="B7GM51"/>
<dbReference type="STRING" id="491915.Aflv_2230"/>
<dbReference type="GeneID" id="7038483"/>
<dbReference type="KEGG" id="afl:Aflv_2230"/>
<dbReference type="PATRIC" id="fig|491915.6.peg.2290"/>
<dbReference type="eggNOG" id="COG1074">
    <property type="taxonomic scope" value="Bacteria"/>
</dbReference>
<dbReference type="HOGENOM" id="CLU_001114_3_1_9"/>
<dbReference type="Proteomes" id="UP000000742">
    <property type="component" value="Chromosome"/>
</dbReference>
<dbReference type="GO" id="GO:0005829">
    <property type="term" value="C:cytosol"/>
    <property type="evidence" value="ECO:0007669"/>
    <property type="project" value="TreeGrafter"/>
</dbReference>
<dbReference type="GO" id="GO:0033202">
    <property type="term" value="C:DNA helicase complex"/>
    <property type="evidence" value="ECO:0007669"/>
    <property type="project" value="TreeGrafter"/>
</dbReference>
<dbReference type="GO" id="GO:0043138">
    <property type="term" value="F:3'-5' DNA helicase activity"/>
    <property type="evidence" value="ECO:0007669"/>
    <property type="project" value="UniProtKB-UniRule"/>
</dbReference>
<dbReference type="GO" id="GO:0008408">
    <property type="term" value="F:3'-5' exonuclease activity"/>
    <property type="evidence" value="ECO:0007669"/>
    <property type="project" value="UniProtKB-UniRule"/>
</dbReference>
<dbReference type="GO" id="GO:0005524">
    <property type="term" value="F:ATP binding"/>
    <property type="evidence" value="ECO:0007669"/>
    <property type="project" value="UniProtKB-UniRule"/>
</dbReference>
<dbReference type="GO" id="GO:0016887">
    <property type="term" value="F:ATP hydrolysis activity"/>
    <property type="evidence" value="ECO:0007669"/>
    <property type="project" value="RHEA"/>
</dbReference>
<dbReference type="GO" id="GO:0003690">
    <property type="term" value="F:double-stranded DNA binding"/>
    <property type="evidence" value="ECO:0007669"/>
    <property type="project" value="UniProtKB-UniRule"/>
</dbReference>
<dbReference type="GO" id="GO:0000724">
    <property type="term" value="P:double-strand break repair via homologous recombination"/>
    <property type="evidence" value="ECO:0007669"/>
    <property type="project" value="UniProtKB-UniRule"/>
</dbReference>
<dbReference type="CDD" id="cd17932">
    <property type="entry name" value="DEXQc_UvrD"/>
    <property type="match status" value="1"/>
</dbReference>
<dbReference type="FunFam" id="3.40.50.300:FF:001236">
    <property type="entry name" value="ATP-dependent helicase/nuclease subunit A"/>
    <property type="match status" value="1"/>
</dbReference>
<dbReference type="Gene3D" id="3.90.320.10">
    <property type="match status" value="1"/>
</dbReference>
<dbReference type="Gene3D" id="3.40.50.300">
    <property type="entry name" value="P-loop containing nucleotide triphosphate hydrolases"/>
    <property type="match status" value="4"/>
</dbReference>
<dbReference type="HAMAP" id="MF_01451">
    <property type="entry name" value="AddA"/>
    <property type="match status" value="1"/>
</dbReference>
<dbReference type="InterPro" id="IPR014152">
    <property type="entry name" value="AddA"/>
</dbReference>
<dbReference type="InterPro" id="IPR014017">
    <property type="entry name" value="DNA_helicase_UvrD-like_C"/>
</dbReference>
<dbReference type="InterPro" id="IPR000212">
    <property type="entry name" value="DNA_helicase_UvrD/REP"/>
</dbReference>
<dbReference type="InterPro" id="IPR027417">
    <property type="entry name" value="P-loop_NTPase"/>
</dbReference>
<dbReference type="InterPro" id="IPR011604">
    <property type="entry name" value="PDDEXK-like_dom_sf"/>
</dbReference>
<dbReference type="InterPro" id="IPR038726">
    <property type="entry name" value="PDDEXK_AddAB-type"/>
</dbReference>
<dbReference type="InterPro" id="IPR011335">
    <property type="entry name" value="Restrct_endonuc-II-like"/>
</dbReference>
<dbReference type="InterPro" id="IPR014016">
    <property type="entry name" value="UvrD-like_ATP-bd"/>
</dbReference>
<dbReference type="NCBIfam" id="TIGR02785">
    <property type="entry name" value="addA_Gpos"/>
    <property type="match status" value="1"/>
</dbReference>
<dbReference type="PANTHER" id="PTHR11070:SF48">
    <property type="entry name" value="ATP-DEPENDENT HELICASE_NUCLEASE SUBUNIT A"/>
    <property type="match status" value="1"/>
</dbReference>
<dbReference type="PANTHER" id="PTHR11070">
    <property type="entry name" value="UVRD / RECB / PCRA DNA HELICASE FAMILY MEMBER"/>
    <property type="match status" value="1"/>
</dbReference>
<dbReference type="Pfam" id="PF12705">
    <property type="entry name" value="PDDEXK_1"/>
    <property type="match status" value="1"/>
</dbReference>
<dbReference type="Pfam" id="PF00580">
    <property type="entry name" value="UvrD-helicase"/>
    <property type="match status" value="1"/>
</dbReference>
<dbReference type="Pfam" id="PF13361">
    <property type="entry name" value="UvrD_C"/>
    <property type="match status" value="1"/>
</dbReference>
<dbReference type="SUPFAM" id="SSF52540">
    <property type="entry name" value="P-loop containing nucleoside triphosphate hydrolases"/>
    <property type="match status" value="1"/>
</dbReference>
<dbReference type="SUPFAM" id="SSF52980">
    <property type="entry name" value="Restriction endonuclease-like"/>
    <property type="match status" value="1"/>
</dbReference>
<dbReference type="PROSITE" id="PS51198">
    <property type="entry name" value="UVRD_HELICASE_ATP_BIND"/>
    <property type="match status" value="1"/>
</dbReference>
<dbReference type="PROSITE" id="PS51217">
    <property type="entry name" value="UVRD_HELICASE_CTER"/>
    <property type="match status" value="1"/>
</dbReference>
<gene>
    <name evidence="1" type="primary">addA</name>
    <name type="ordered locus">Aflv_2230</name>
</gene>
<reference key="1">
    <citation type="journal article" date="2008" name="Genome Biol.">
        <title>Encapsulated in silica: genome, proteome and physiology of the thermophilic bacterium Anoxybacillus flavithermus WK1.</title>
        <authorList>
            <person name="Saw J.H."/>
            <person name="Mountain B.W."/>
            <person name="Feng L."/>
            <person name="Omelchenko M.V."/>
            <person name="Hou S."/>
            <person name="Saito J.A."/>
            <person name="Stott M.B."/>
            <person name="Li D."/>
            <person name="Zhao G."/>
            <person name="Wu J."/>
            <person name="Galperin M.Y."/>
            <person name="Koonin E.V."/>
            <person name="Makarova K.S."/>
            <person name="Wolf Y.I."/>
            <person name="Rigden D.J."/>
            <person name="Dunfield P.F."/>
            <person name="Wang L."/>
            <person name="Alam M."/>
        </authorList>
    </citation>
    <scope>NUCLEOTIDE SEQUENCE [LARGE SCALE GENOMIC DNA]</scope>
    <source>
        <strain>DSM 21510 / WK1</strain>
    </source>
</reference>
<protein>
    <recommendedName>
        <fullName evidence="1">ATP-dependent helicase/nuclease subunit A</fullName>
        <ecNumber evidence="1">3.1.-.-</ecNumber>
        <ecNumber evidence="1">5.6.2.4</ecNumber>
    </recommendedName>
    <alternativeName>
        <fullName evidence="1">ATP-dependent helicase/nuclease AddA</fullName>
    </alternativeName>
    <alternativeName>
        <fullName evidence="1">DNA 3'-5' helicase AddA</fullName>
    </alternativeName>
</protein>
<name>ADDA_ANOFW</name>
<evidence type="ECO:0000255" key="1">
    <source>
        <dbReference type="HAMAP-Rule" id="MF_01451"/>
    </source>
</evidence>
<organism>
    <name type="scientific">Anoxybacillus flavithermus (strain DSM 21510 / WK1)</name>
    <dbReference type="NCBI Taxonomy" id="491915"/>
    <lineage>
        <taxon>Bacteria</taxon>
        <taxon>Bacillati</taxon>
        <taxon>Bacillota</taxon>
        <taxon>Bacilli</taxon>
        <taxon>Bacillales</taxon>
        <taxon>Anoxybacillaceae</taxon>
        <taxon>Anoxybacillus</taxon>
    </lineage>
</organism>